<geneLocation type="chloroplast"/>
<keyword id="KW-0150">Chloroplast</keyword>
<keyword id="KW-0249">Electron transport</keyword>
<keyword id="KW-0349">Heme</keyword>
<keyword id="KW-0408">Iron</keyword>
<keyword id="KW-0472">Membrane</keyword>
<keyword id="KW-0479">Metal-binding</keyword>
<keyword id="KW-0602">Photosynthesis</keyword>
<keyword id="KW-0934">Plastid</keyword>
<keyword id="KW-0732">Signal</keyword>
<keyword id="KW-0793">Thylakoid</keyword>
<keyword id="KW-0812">Transmembrane</keyword>
<keyword id="KW-1133">Transmembrane helix</keyword>
<keyword id="KW-0813">Transport</keyword>
<sequence>MQTRNAFSWIKKEITRSISVLLMIYIITRAPISNAYPIFAQQGYENPREATGRIVCANCHLANKPVDIEVPQAILPDTVFEAVVRIPYDMQVKQVLANGKKGALNVGAVLILPEGFELAPPDRLSPEIKEKIGNLSFQSYRPTKKNIIVIGPVPGKKYSEITFPILSPDPATKRDVYFLKYPIYVGGTRGRGQIYPDGSKSNNNVYNATATGVVNKKIRKEKGGYEITIVDGSDGREVIDIIPPGPELLVSEGESIKLDQPLTSNPNVGGFGQGDAEIVLQDPLRVQGLLLFLASIILAQIFLVLKKKQFEKVQLSEMNF</sequence>
<comment type="function">
    <text evidence="1">Component of the cytochrome b6-f complex, which mediates electron transfer between photosystem II (PSII) and photosystem I (PSI), cyclic electron flow around PSI, and state transitions.</text>
</comment>
<comment type="cofactor">
    <cofactor evidence="1">
        <name>heme</name>
        <dbReference type="ChEBI" id="CHEBI:30413"/>
    </cofactor>
    <text evidence="1">Binds 1 heme group covalently.</text>
</comment>
<comment type="subunit">
    <text evidence="1">The 4 large subunits of the cytochrome b6-f complex are cytochrome b6, subunit IV (17 kDa polypeptide, petD), cytochrome f and the Rieske protein, while the 4 small subunits are PetG, PetL, PetM and PetN. The complex functions as a dimer (By similarity).</text>
</comment>
<comment type="subcellular location">
    <subcellularLocation>
        <location evidence="1">Plastid</location>
        <location evidence="1">Chloroplast thylakoid membrane</location>
        <topology evidence="1">Single-pass membrane protein</topology>
    </subcellularLocation>
</comment>
<comment type="similarity">
    <text evidence="3">Belongs to the cytochrome f family.</text>
</comment>
<accession>P06669</accession>
<feature type="signal peptide" evidence="1">
    <location>
        <begin position="1"/>
        <end position="35"/>
    </location>
</feature>
<feature type="chain" id="PRO_0000023839" description="Cytochrome f">
    <location>
        <begin position="36"/>
        <end position="320"/>
    </location>
</feature>
<feature type="transmembrane region" description="Helical" evidence="2">
    <location>
        <begin position="286"/>
        <end position="305"/>
    </location>
</feature>
<feature type="binding site" description="axial binding residue" evidence="1">
    <location>
        <position position="36"/>
    </location>
    <ligand>
        <name>heme</name>
        <dbReference type="ChEBI" id="CHEBI:30413"/>
    </ligand>
    <ligandPart>
        <name>Fe</name>
        <dbReference type="ChEBI" id="CHEBI:18248"/>
    </ligandPart>
</feature>
<feature type="binding site" description="covalent" evidence="1">
    <location>
        <position position="56"/>
    </location>
    <ligand>
        <name>heme</name>
        <dbReference type="ChEBI" id="CHEBI:30413"/>
    </ligand>
</feature>
<feature type="binding site" description="covalent" evidence="1">
    <location>
        <position position="59"/>
    </location>
    <ligand>
        <name>heme</name>
        <dbReference type="ChEBI" id="CHEBI:30413"/>
    </ligand>
</feature>
<feature type="binding site" description="axial binding residue" evidence="1">
    <location>
        <position position="60"/>
    </location>
    <ligand>
        <name>heme</name>
        <dbReference type="ChEBI" id="CHEBI:30413"/>
    </ligand>
    <ligandPart>
        <name>Fe</name>
        <dbReference type="ChEBI" id="CHEBI:18248"/>
    </ligandPart>
</feature>
<name>CYF_VICFA</name>
<organism>
    <name type="scientific">Vicia faba</name>
    <name type="common">Broad bean</name>
    <name type="synonym">Faba vulgaris</name>
    <dbReference type="NCBI Taxonomy" id="3906"/>
    <lineage>
        <taxon>Eukaryota</taxon>
        <taxon>Viridiplantae</taxon>
        <taxon>Streptophyta</taxon>
        <taxon>Embryophyta</taxon>
        <taxon>Tracheophyta</taxon>
        <taxon>Spermatophyta</taxon>
        <taxon>Magnoliopsida</taxon>
        <taxon>eudicotyledons</taxon>
        <taxon>Gunneridae</taxon>
        <taxon>Pentapetalae</taxon>
        <taxon>rosids</taxon>
        <taxon>fabids</taxon>
        <taxon>Fabales</taxon>
        <taxon>Fabaceae</taxon>
        <taxon>Papilionoideae</taxon>
        <taxon>50 kb inversion clade</taxon>
        <taxon>NPAAA clade</taxon>
        <taxon>Hologalegina</taxon>
        <taxon>IRL clade</taxon>
        <taxon>Fabeae</taxon>
        <taxon>Vicia</taxon>
    </lineage>
</organism>
<gene>
    <name type="primary">petA</name>
</gene>
<protein>
    <recommendedName>
        <fullName>Cytochrome f</fullName>
    </recommendedName>
</protein>
<evidence type="ECO:0000250" key="1"/>
<evidence type="ECO:0000255" key="2"/>
<evidence type="ECO:0000305" key="3"/>
<proteinExistence type="inferred from homology"/>
<reference key="1">
    <citation type="journal article" date="1987" name="Nucleic Acids Res.">
        <title>Sequence of the apocytochrome f gene encoded by the Vicia faba chloroplast genome.</title>
        <authorList>
            <person name="Ko K."/>
            <person name="Straus N.A."/>
        </authorList>
    </citation>
    <scope>NUCLEOTIDE SEQUENCE [GENOMIC DNA]</scope>
</reference>
<dbReference type="EMBL" id="X04920">
    <property type="protein sequence ID" value="CAA28587.1"/>
    <property type="molecule type" value="Genomic_DNA"/>
</dbReference>
<dbReference type="PIR" id="A26576">
    <property type="entry name" value="A26576"/>
</dbReference>
<dbReference type="SMR" id="P06669"/>
<dbReference type="GO" id="GO:0009535">
    <property type="term" value="C:chloroplast thylakoid membrane"/>
    <property type="evidence" value="ECO:0007669"/>
    <property type="project" value="UniProtKB-SubCell"/>
</dbReference>
<dbReference type="GO" id="GO:0009055">
    <property type="term" value="F:electron transfer activity"/>
    <property type="evidence" value="ECO:0007669"/>
    <property type="project" value="UniProtKB-UniRule"/>
</dbReference>
<dbReference type="GO" id="GO:0020037">
    <property type="term" value="F:heme binding"/>
    <property type="evidence" value="ECO:0007669"/>
    <property type="project" value="InterPro"/>
</dbReference>
<dbReference type="GO" id="GO:0005506">
    <property type="term" value="F:iron ion binding"/>
    <property type="evidence" value="ECO:0007669"/>
    <property type="project" value="InterPro"/>
</dbReference>
<dbReference type="GO" id="GO:0015979">
    <property type="term" value="P:photosynthesis"/>
    <property type="evidence" value="ECO:0007669"/>
    <property type="project" value="UniProtKB-UniRule"/>
</dbReference>
<dbReference type="FunFam" id="1.20.5.700:FF:000001">
    <property type="entry name" value="Cytochrome f"/>
    <property type="match status" value="1"/>
</dbReference>
<dbReference type="FunFam" id="2.40.50.100:FF:000007">
    <property type="entry name" value="Cytochrome f"/>
    <property type="match status" value="1"/>
</dbReference>
<dbReference type="FunFam" id="2.60.40.830:FF:000001">
    <property type="entry name" value="Cytochrome f"/>
    <property type="match status" value="1"/>
</dbReference>
<dbReference type="Gene3D" id="2.40.50.100">
    <property type="match status" value="1"/>
</dbReference>
<dbReference type="Gene3D" id="2.60.40.830">
    <property type="entry name" value="Cytochrome f large domain"/>
    <property type="match status" value="1"/>
</dbReference>
<dbReference type="Gene3D" id="1.20.5.700">
    <property type="entry name" value="Single helix bin"/>
    <property type="match status" value="1"/>
</dbReference>
<dbReference type="HAMAP" id="MF_00610">
    <property type="entry name" value="Cytb6_f_cytF"/>
    <property type="match status" value="1"/>
</dbReference>
<dbReference type="InterPro" id="IPR024058">
    <property type="entry name" value="Cyt-f_TM"/>
</dbReference>
<dbReference type="InterPro" id="IPR002325">
    <property type="entry name" value="Cyt_f"/>
</dbReference>
<dbReference type="InterPro" id="IPR024094">
    <property type="entry name" value="Cyt_f_lg_dom"/>
</dbReference>
<dbReference type="InterPro" id="IPR036826">
    <property type="entry name" value="Cyt_f_lg_dom_sf"/>
</dbReference>
<dbReference type="InterPro" id="IPR011054">
    <property type="entry name" value="Rudment_hybrid_motif"/>
</dbReference>
<dbReference type="PANTHER" id="PTHR33288">
    <property type="match status" value="1"/>
</dbReference>
<dbReference type="PANTHER" id="PTHR33288:SF10">
    <property type="entry name" value="CYTOCHROME F"/>
    <property type="match status" value="1"/>
</dbReference>
<dbReference type="Pfam" id="PF01333">
    <property type="entry name" value="Apocytochr_F_C"/>
    <property type="match status" value="1"/>
</dbReference>
<dbReference type="Pfam" id="PF16639">
    <property type="entry name" value="Apocytochr_F_N"/>
    <property type="match status" value="1"/>
</dbReference>
<dbReference type="PRINTS" id="PR00610">
    <property type="entry name" value="CYTOCHROMEF"/>
</dbReference>
<dbReference type="SUPFAM" id="SSF103431">
    <property type="entry name" value="Cytochrome f subunit of the cytochrome b6f complex, transmembrane anchor"/>
    <property type="match status" value="1"/>
</dbReference>
<dbReference type="SUPFAM" id="SSF49441">
    <property type="entry name" value="Cytochrome f, large domain"/>
    <property type="match status" value="1"/>
</dbReference>
<dbReference type="SUPFAM" id="SSF51246">
    <property type="entry name" value="Rudiment single hybrid motif"/>
    <property type="match status" value="1"/>
</dbReference>
<dbReference type="PROSITE" id="PS51010">
    <property type="entry name" value="CYTF"/>
    <property type="match status" value="1"/>
</dbReference>